<geneLocation type="mitochondrion"/>
<accession>Q5ZNA2</accession>
<keyword id="KW-0249">Electron transport</keyword>
<keyword id="KW-0472">Membrane</keyword>
<keyword id="KW-0496">Mitochondrion</keyword>
<keyword id="KW-0999">Mitochondrion inner membrane</keyword>
<keyword id="KW-0520">NAD</keyword>
<keyword id="KW-0679">Respiratory chain</keyword>
<keyword id="KW-1278">Translocase</keyword>
<keyword id="KW-0812">Transmembrane</keyword>
<keyword id="KW-1133">Transmembrane helix</keyword>
<keyword id="KW-0813">Transport</keyword>
<keyword id="KW-0830">Ubiquinone</keyword>
<name>NU4LM_ZAGBR</name>
<evidence type="ECO:0000250" key="1">
    <source>
        <dbReference type="UniProtKB" id="P03901"/>
    </source>
</evidence>
<evidence type="ECO:0000250" key="2">
    <source>
        <dbReference type="UniProtKB" id="P03902"/>
    </source>
</evidence>
<evidence type="ECO:0000255" key="3"/>
<evidence type="ECO:0000305" key="4"/>
<sequence>MTTMFFNLLLAFMVALMGVYIYREHLMSTLLCLEGMMLSIFIMVSLTLLHHHLNSTMMFPLILLVFSACEAGVGLALLVKTSNSYGTDYIDNLNLLQC</sequence>
<protein>
    <recommendedName>
        <fullName>NADH-ubiquinone oxidoreductase chain 4L</fullName>
        <ecNumber>7.1.1.2</ecNumber>
    </recommendedName>
    <alternativeName>
        <fullName>NADH dehydrogenase subunit 4L</fullName>
    </alternativeName>
</protein>
<reference key="1">
    <citation type="journal article" date="2004" name="Gene">
        <title>Marsupial relationships and a timeline for marsupial radiation in South Gondwana.</title>
        <authorList>
            <person name="Nilsson M.A."/>
            <person name="Arnason U."/>
            <person name="Spencer P.B.S."/>
            <person name="Janke A."/>
        </authorList>
    </citation>
    <scope>NUCLEOTIDE SEQUENCE [GENOMIC DNA]</scope>
    <source>
        <tissue>Liver</tissue>
    </source>
</reference>
<proteinExistence type="inferred from homology"/>
<comment type="function">
    <text evidence="1">Core subunit of the mitochondrial membrane respiratory chain NADH dehydrogenase (Complex I) which catalyzes electron transfer from NADH through the respiratory chain, using ubiquinone as an electron acceptor. Part of the enzyme membrane arm which is embedded in the lipid bilayer and involved in proton translocation.</text>
</comment>
<comment type="catalytic activity">
    <reaction evidence="1">
        <text>a ubiquinone + NADH + 5 H(+)(in) = a ubiquinol + NAD(+) + 4 H(+)(out)</text>
        <dbReference type="Rhea" id="RHEA:29091"/>
        <dbReference type="Rhea" id="RHEA-COMP:9565"/>
        <dbReference type="Rhea" id="RHEA-COMP:9566"/>
        <dbReference type="ChEBI" id="CHEBI:15378"/>
        <dbReference type="ChEBI" id="CHEBI:16389"/>
        <dbReference type="ChEBI" id="CHEBI:17976"/>
        <dbReference type="ChEBI" id="CHEBI:57540"/>
        <dbReference type="ChEBI" id="CHEBI:57945"/>
        <dbReference type="EC" id="7.1.1.2"/>
    </reaction>
    <physiologicalReaction direction="left-to-right" evidence="1">
        <dbReference type="Rhea" id="RHEA:29092"/>
    </physiologicalReaction>
</comment>
<comment type="subunit">
    <text evidence="2">Core subunit of respiratory chain NADH dehydrogenase (Complex I) which is composed of 45 different subunits.</text>
</comment>
<comment type="subcellular location">
    <subcellularLocation>
        <location evidence="2">Mitochondrion inner membrane</location>
        <topology evidence="3">Multi-pass membrane protein</topology>
    </subcellularLocation>
</comment>
<comment type="similarity">
    <text evidence="4">Belongs to the complex I subunit 4L family.</text>
</comment>
<organism>
    <name type="scientific">Zaglossus bruijni</name>
    <name type="common">Western long-beaked echidna</name>
    <dbReference type="NCBI Taxonomy" id="33543"/>
    <lineage>
        <taxon>Eukaryota</taxon>
        <taxon>Metazoa</taxon>
        <taxon>Chordata</taxon>
        <taxon>Craniata</taxon>
        <taxon>Vertebrata</taxon>
        <taxon>Euteleostomi</taxon>
        <taxon>Mammalia</taxon>
        <taxon>Monotremata</taxon>
        <taxon>Tachyglossidae</taxon>
        <taxon>Zaglossus</taxon>
    </lineage>
</organism>
<dbReference type="EC" id="7.1.1.2"/>
<dbReference type="EMBL" id="AJ639865">
    <property type="protein sequence ID" value="CAG26337.1"/>
    <property type="molecule type" value="Genomic_DNA"/>
</dbReference>
<dbReference type="RefSeq" id="YP_122151.1">
    <property type="nucleotide sequence ID" value="NC_006364.1"/>
</dbReference>
<dbReference type="SMR" id="Q5ZNA2"/>
<dbReference type="GeneID" id="3112559"/>
<dbReference type="CTD" id="4539"/>
<dbReference type="GO" id="GO:0005743">
    <property type="term" value="C:mitochondrial inner membrane"/>
    <property type="evidence" value="ECO:0000250"/>
    <property type="project" value="UniProtKB"/>
</dbReference>
<dbReference type="GO" id="GO:0045271">
    <property type="term" value="C:respiratory chain complex I"/>
    <property type="evidence" value="ECO:0000250"/>
    <property type="project" value="UniProtKB"/>
</dbReference>
<dbReference type="GO" id="GO:0008137">
    <property type="term" value="F:NADH dehydrogenase (ubiquinone) activity"/>
    <property type="evidence" value="ECO:0000250"/>
    <property type="project" value="UniProtKB"/>
</dbReference>
<dbReference type="GO" id="GO:0042773">
    <property type="term" value="P:ATP synthesis coupled electron transport"/>
    <property type="evidence" value="ECO:0007669"/>
    <property type="project" value="InterPro"/>
</dbReference>
<dbReference type="FunFam" id="1.10.287.3510:FF:000002">
    <property type="entry name" value="NADH-ubiquinone oxidoreductase chain 4L"/>
    <property type="match status" value="1"/>
</dbReference>
<dbReference type="Gene3D" id="1.10.287.3510">
    <property type="match status" value="1"/>
</dbReference>
<dbReference type="InterPro" id="IPR001133">
    <property type="entry name" value="NADH_UbQ_OxRdtase_chain4L/K"/>
</dbReference>
<dbReference type="InterPro" id="IPR039428">
    <property type="entry name" value="NUOK/Mnh_C1-like"/>
</dbReference>
<dbReference type="PANTHER" id="PTHR11434:SF0">
    <property type="entry name" value="NADH-UBIQUINONE OXIDOREDUCTASE CHAIN 4L"/>
    <property type="match status" value="1"/>
</dbReference>
<dbReference type="PANTHER" id="PTHR11434">
    <property type="entry name" value="NADH-UBIQUINONE OXIDOREDUCTASE SUBUNIT ND4L"/>
    <property type="match status" value="1"/>
</dbReference>
<dbReference type="Pfam" id="PF00420">
    <property type="entry name" value="Oxidored_q2"/>
    <property type="match status" value="1"/>
</dbReference>
<feature type="chain" id="PRO_0000275151" description="NADH-ubiquinone oxidoreductase chain 4L">
    <location>
        <begin position="1"/>
        <end position="98"/>
    </location>
</feature>
<feature type="transmembrane region" description="Helical" evidence="3">
    <location>
        <begin position="1"/>
        <end position="21"/>
    </location>
</feature>
<feature type="transmembrane region" description="Helical" evidence="3">
    <location>
        <begin position="29"/>
        <end position="49"/>
    </location>
</feature>
<feature type="transmembrane region" description="Helical" evidence="3">
    <location>
        <begin position="59"/>
        <end position="79"/>
    </location>
</feature>
<gene>
    <name type="primary">MT-ND4L</name>
    <name type="synonym">MTND4L</name>
    <name type="synonym">NADH4L</name>
    <name type="synonym">ND4L</name>
</gene>